<protein>
    <recommendedName>
        <fullName evidence="7">Chemokine-like protein TAFA-3</fullName>
    </recommendedName>
</protein>
<evidence type="ECO:0000250" key="1">
    <source>
        <dbReference type="UniProtKB" id="Q7TPG6"/>
    </source>
</evidence>
<evidence type="ECO:0000255" key="2"/>
<evidence type="ECO:0000269" key="3">
    <source>
    </source>
</evidence>
<evidence type="ECO:0000269" key="4">
    <source>
    </source>
</evidence>
<evidence type="ECO:0000303" key="5">
    <source>
    </source>
</evidence>
<evidence type="ECO:0000303" key="6">
    <source>
    </source>
</evidence>
<evidence type="ECO:0000305" key="7"/>
<evidence type="ECO:0000312" key="8">
    <source>
        <dbReference type="HGNC" id="HGNC:21590"/>
    </source>
</evidence>
<accession>Q7Z5A8</accession>
<accession>B7ZLU0</accession>
<accession>Q2M1P9</accession>
<accession>Q7Z5A6</accession>
<comment type="function">
    <text evidence="1">Plays a role in the regulation of microglia polarization.</text>
</comment>
<comment type="subcellular location">
    <subcellularLocation>
        <location evidence="3 4">Secreted</location>
    </subcellularLocation>
</comment>
<comment type="alternative products">
    <event type="alternative splicing"/>
    <isoform>
        <id>Q7Z5A8-1</id>
        <name>1</name>
        <name>TAFA3</name>
        <sequence type="displayed"/>
    </isoform>
    <isoform>
        <id>Q7Z5A8-2</id>
        <name>2</name>
        <name>TAFA3.2</name>
        <sequence type="described" ref="VSP_016067"/>
    </isoform>
</comment>
<comment type="tissue specificity">
    <text evidence="3 4">Brain-specific.</text>
</comment>
<comment type="similarity">
    <text evidence="7">Belongs to the TAFA family.</text>
</comment>
<organism>
    <name type="scientific">Homo sapiens</name>
    <name type="common">Human</name>
    <dbReference type="NCBI Taxonomy" id="9606"/>
    <lineage>
        <taxon>Eukaryota</taxon>
        <taxon>Metazoa</taxon>
        <taxon>Chordata</taxon>
        <taxon>Craniata</taxon>
        <taxon>Vertebrata</taxon>
        <taxon>Euteleostomi</taxon>
        <taxon>Mammalia</taxon>
        <taxon>Eutheria</taxon>
        <taxon>Euarchontoglires</taxon>
        <taxon>Primates</taxon>
        <taxon>Haplorrhini</taxon>
        <taxon>Catarrhini</taxon>
        <taxon>Hominidae</taxon>
        <taxon>Homo</taxon>
    </lineage>
</organism>
<sequence length="133" mass="14776">MSERVERNWSTGGWLLALCLAWLWTHLTLAALQPPTATVLVQQGTCEVIAAHRCCNRNRIEERSQTVKCSCFSGQVAGTTRAKPSCVDASIVLQRWWCQMEPCLPGEECKVLPDLSGWSCSSGHKVKTTKVTR</sequence>
<name>TAFA3_HUMAN</name>
<keyword id="KW-0025">Alternative splicing</keyword>
<keyword id="KW-1185">Reference proteome</keyword>
<keyword id="KW-0964">Secreted</keyword>
<keyword id="KW-0732">Signal</keyword>
<feature type="signal peptide" evidence="2">
    <location>
        <begin position="1"/>
        <end position="30"/>
    </location>
</feature>
<feature type="chain" id="PRO_0000042726" description="Chemokine-like protein TAFA-3">
    <location>
        <begin position="31"/>
        <end position="133"/>
    </location>
</feature>
<feature type="splice variant" id="VSP_016067" description="In isoform 2." evidence="5 6">
    <original>ASIVLQRWWCQMEPCLPGEECKVLPDLSGWSCSSGHKVKTTKVTR</original>
    <variation>DLLLAAHCARRDPRAALRLLLPQPPSSCRDGGVRWSPACRGRSVRCSRTCRDGAAAVDTKSKPPRSHDSSWGSRPGQERLD</variation>
    <location>
        <begin position="89"/>
        <end position="133"/>
    </location>
</feature>
<gene>
    <name evidence="8" type="primary">TAFA3</name>
    <name evidence="8" type="synonym">FAM19A3</name>
</gene>
<proteinExistence type="evidence at transcript level"/>
<dbReference type="EMBL" id="AY325116">
    <property type="protein sequence ID" value="AAP92408.1"/>
    <property type="molecule type" value="mRNA"/>
</dbReference>
<dbReference type="EMBL" id="AY325119">
    <property type="protein sequence ID" value="AAP92411.1"/>
    <property type="molecule type" value="mRNA"/>
</dbReference>
<dbReference type="EMBL" id="AL603832">
    <property type="status" value="NOT_ANNOTATED_CDS"/>
    <property type="molecule type" value="Genomic_DNA"/>
</dbReference>
<dbReference type="EMBL" id="CH471122">
    <property type="protein sequence ID" value="EAW56548.1"/>
    <property type="molecule type" value="Genomic_DNA"/>
</dbReference>
<dbReference type="EMBL" id="CH471122">
    <property type="protein sequence ID" value="EAW56549.1"/>
    <property type="molecule type" value="Genomic_DNA"/>
</dbReference>
<dbReference type="EMBL" id="BC112268">
    <property type="protein sequence ID" value="AAI12269.1"/>
    <property type="molecule type" value="mRNA"/>
</dbReference>
<dbReference type="EMBL" id="BC117479">
    <property type="protein sequence ID" value="AAI17480.1"/>
    <property type="molecule type" value="mRNA"/>
</dbReference>
<dbReference type="EMBL" id="BC144043">
    <property type="protein sequence ID" value="AAI44044.1"/>
    <property type="molecule type" value="mRNA"/>
</dbReference>
<dbReference type="CCDS" id="CCDS30806.1">
    <molecule id="Q7Z5A8-2"/>
</dbReference>
<dbReference type="CCDS" id="CCDS856.1">
    <molecule id="Q7Z5A8-1"/>
</dbReference>
<dbReference type="RefSeq" id="NP_001004440.1">
    <molecule id="Q7Z5A8-2"/>
    <property type="nucleotide sequence ID" value="NM_001004440.2"/>
</dbReference>
<dbReference type="RefSeq" id="NP_877436.1">
    <molecule id="Q7Z5A8-1"/>
    <property type="nucleotide sequence ID" value="NM_182759.3"/>
</dbReference>
<dbReference type="RefSeq" id="XP_005270823.1">
    <property type="nucleotide sequence ID" value="XM_005270766.3"/>
</dbReference>
<dbReference type="RefSeq" id="XP_006710645.1">
    <property type="nucleotide sequence ID" value="XM_006710582.3"/>
</dbReference>
<dbReference type="BioGRID" id="129885">
    <property type="interactions" value="85"/>
</dbReference>
<dbReference type="FunCoup" id="Q7Z5A8">
    <property type="interactions" value="261"/>
</dbReference>
<dbReference type="IntAct" id="Q7Z5A8">
    <property type="interactions" value="77"/>
</dbReference>
<dbReference type="MINT" id="Q7Z5A8"/>
<dbReference type="STRING" id="9606.ENSP00000358644"/>
<dbReference type="iPTMnet" id="Q7Z5A8"/>
<dbReference type="PhosphoSitePlus" id="Q7Z5A8"/>
<dbReference type="BioMuta" id="FAM19A3"/>
<dbReference type="DMDM" id="74750123"/>
<dbReference type="MassIVE" id="Q7Z5A8"/>
<dbReference type="PaxDb" id="9606-ENSP00000358644"/>
<dbReference type="PeptideAtlas" id="Q7Z5A8"/>
<dbReference type="Antibodypedia" id="33837">
    <property type="antibodies" value="103 antibodies from 17 providers"/>
</dbReference>
<dbReference type="DNASU" id="284467"/>
<dbReference type="Ensembl" id="ENST00000361886.4">
    <molecule id="Q7Z5A8-1"/>
    <property type="protein sequence ID" value="ENSP00000355042.3"/>
    <property type="gene ID" value="ENSG00000184599.14"/>
</dbReference>
<dbReference type="Ensembl" id="ENST00000369630.7">
    <molecule id="Q7Z5A8-2"/>
    <property type="protein sequence ID" value="ENSP00000358644.3"/>
    <property type="gene ID" value="ENSG00000184599.14"/>
</dbReference>
<dbReference type="GeneID" id="284467"/>
<dbReference type="KEGG" id="hsa:284467"/>
<dbReference type="MANE-Select" id="ENST00000361886.4">
    <property type="protein sequence ID" value="ENSP00000355042.3"/>
    <property type="RefSeq nucleotide sequence ID" value="NM_182759.3"/>
    <property type="RefSeq protein sequence ID" value="NP_877436.1"/>
</dbReference>
<dbReference type="UCSC" id="uc001ecu.4">
    <molecule id="Q7Z5A8-1"/>
    <property type="organism name" value="human"/>
</dbReference>
<dbReference type="AGR" id="HGNC:21590"/>
<dbReference type="CTD" id="284467"/>
<dbReference type="GeneCards" id="TAFA3"/>
<dbReference type="HGNC" id="HGNC:21590">
    <property type="gene designation" value="TAFA3"/>
</dbReference>
<dbReference type="HPA" id="ENSG00000184599">
    <property type="expression patterns" value="Tissue enhanced (adrenal gland, retina)"/>
</dbReference>
<dbReference type="MIM" id="617497">
    <property type="type" value="gene"/>
</dbReference>
<dbReference type="neXtProt" id="NX_Q7Z5A8"/>
<dbReference type="OpenTargets" id="ENSG00000184599"/>
<dbReference type="PharmGKB" id="PA134899352"/>
<dbReference type="VEuPathDB" id="HostDB:ENSG00000184599"/>
<dbReference type="eggNOG" id="ENOG502SVHN">
    <property type="taxonomic scope" value="Eukaryota"/>
</dbReference>
<dbReference type="GeneTree" id="ENSGT00940000155644"/>
<dbReference type="HOGENOM" id="CLU_126078_0_0_1"/>
<dbReference type="InParanoid" id="Q7Z5A8"/>
<dbReference type="OMA" id="PAHESKM"/>
<dbReference type="OrthoDB" id="9924724at2759"/>
<dbReference type="PAN-GO" id="Q7Z5A8">
    <property type="GO annotations" value="6 GO annotations based on evolutionary models"/>
</dbReference>
<dbReference type="PhylomeDB" id="Q7Z5A8"/>
<dbReference type="TreeFam" id="TF331749"/>
<dbReference type="PathwayCommons" id="Q7Z5A8"/>
<dbReference type="SignaLink" id="Q7Z5A8"/>
<dbReference type="BioGRID-ORCS" id="284467">
    <property type="hits" value="9 hits in 1148 CRISPR screens"/>
</dbReference>
<dbReference type="GenomeRNAi" id="284467"/>
<dbReference type="Pharos" id="Q7Z5A8">
    <property type="development level" value="Tdark"/>
</dbReference>
<dbReference type="PRO" id="PR:Q7Z5A8"/>
<dbReference type="Proteomes" id="UP000005640">
    <property type="component" value="Chromosome 1"/>
</dbReference>
<dbReference type="RNAct" id="Q7Z5A8">
    <property type="molecule type" value="protein"/>
</dbReference>
<dbReference type="Bgee" id="ENSG00000184599">
    <property type="expression patterns" value="Expressed in left testis and 72 other cell types or tissues"/>
</dbReference>
<dbReference type="GO" id="GO:0005615">
    <property type="term" value="C:extracellular space"/>
    <property type="evidence" value="ECO:0000314"/>
    <property type="project" value="MGI"/>
</dbReference>
<dbReference type="GO" id="GO:0048018">
    <property type="term" value="F:receptor ligand activity"/>
    <property type="evidence" value="ECO:0000318"/>
    <property type="project" value="GO_Central"/>
</dbReference>
<dbReference type="GO" id="GO:1903979">
    <property type="term" value="P:negative regulation of microglial cell activation"/>
    <property type="evidence" value="ECO:0000250"/>
    <property type="project" value="UniProtKB"/>
</dbReference>
<dbReference type="GO" id="GO:1903980">
    <property type="term" value="P:positive regulation of microglial cell activation"/>
    <property type="evidence" value="ECO:0000250"/>
    <property type="project" value="UniProtKB"/>
</dbReference>
<dbReference type="InterPro" id="IPR020350">
    <property type="entry name" value="Chemokine-like_TAFA"/>
</dbReference>
<dbReference type="InterPro" id="IPR051743">
    <property type="entry name" value="TAFA_chemokine-like"/>
</dbReference>
<dbReference type="PANTHER" id="PTHR31770">
    <property type="entry name" value="CHEMOKINE-LIKE PROTEIN TAFA FAMILY MEMBER"/>
    <property type="match status" value="1"/>
</dbReference>
<dbReference type="PANTHER" id="PTHR31770:SF3">
    <property type="entry name" value="CHEMOKINE-LIKE PROTEIN TAFA-3"/>
    <property type="match status" value="1"/>
</dbReference>
<dbReference type="Pfam" id="PF12020">
    <property type="entry name" value="TAFA"/>
    <property type="match status" value="1"/>
</dbReference>
<reference key="1">
    <citation type="journal article" date="2004" name="Genomics">
        <title>TAFA: a novel secreted family with conserved cysteine residues and restricted expression in the brain.</title>
        <authorList>
            <person name="Tom Tang Y."/>
            <person name="Emtage P."/>
            <person name="Funk W.D."/>
            <person name="Hu T."/>
            <person name="Arterburn M."/>
            <person name="Park E.E."/>
            <person name="Rupp F."/>
        </authorList>
    </citation>
    <scope>NUCLEOTIDE SEQUENCE [MRNA] (ISOFORMS 1 AND 2)</scope>
    <scope>TISSUE SPECIFICITY</scope>
    <scope>SUBCELLULAR LOCATION</scope>
</reference>
<reference key="2">
    <citation type="journal article" date="2006" name="Nature">
        <title>The DNA sequence and biological annotation of human chromosome 1.</title>
        <authorList>
            <person name="Gregory S.G."/>
            <person name="Barlow K.F."/>
            <person name="McLay K.E."/>
            <person name="Kaul R."/>
            <person name="Swarbreck D."/>
            <person name="Dunham A."/>
            <person name="Scott C.E."/>
            <person name="Howe K.L."/>
            <person name="Woodfine K."/>
            <person name="Spencer C.C.A."/>
            <person name="Jones M.C."/>
            <person name="Gillson C."/>
            <person name="Searle S."/>
            <person name="Zhou Y."/>
            <person name="Kokocinski F."/>
            <person name="McDonald L."/>
            <person name="Evans R."/>
            <person name="Phillips K."/>
            <person name="Atkinson A."/>
            <person name="Cooper R."/>
            <person name="Jones C."/>
            <person name="Hall R.E."/>
            <person name="Andrews T.D."/>
            <person name="Lloyd C."/>
            <person name="Ainscough R."/>
            <person name="Almeida J.P."/>
            <person name="Ambrose K.D."/>
            <person name="Anderson F."/>
            <person name="Andrew R.W."/>
            <person name="Ashwell R.I.S."/>
            <person name="Aubin K."/>
            <person name="Babbage A.K."/>
            <person name="Bagguley C.L."/>
            <person name="Bailey J."/>
            <person name="Beasley H."/>
            <person name="Bethel G."/>
            <person name="Bird C.P."/>
            <person name="Bray-Allen S."/>
            <person name="Brown J.Y."/>
            <person name="Brown A.J."/>
            <person name="Buckley D."/>
            <person name="Burton J."/>
            <person name="Bye J."/>
            <person name="Carder C."/>
            <person name="Chapman J.C."/>
            <person name="Clark S.Y."/>
            <person name="Clarke G."/>
            <person name="Clee C."/>
            <person name="Cobley V."/>
            <person name="Collier R.E."/>
            <person name="Corby N."/>
            <person name="Coville G.J."/>
            <person name="Davies J."/>
            <person name="Deadman R."/>
            <person name="Dunn M."/>
            <person name="Earthrowl M."/>
            <person name="Ellington A.G."/>
            <person name="Errington H."/>
            <person name="Frankish A."/>
            <person name="Frankland J."/>
            <person name="French L."/>
            <person name="Garner P."/>
            <person name="Garnett J."/>
            <person name="Gay L."/>
            <person name="Ghori M.R.J."/>
            <person name="Gibson R."/>
            <person name="Gilby L.M."/>
            <person name="Gillett W."/>
            <person name="Glithero R.J."/>
            <person name="Grafham D.V."/>
            <person name="Griffiths C."/>
            <person name="Griffiths-Jones S."/>
            <person name="Grocock R."/>
            <person name="Hammond S."/>
            <person name="Harrison E.S.I."/>
            <person name="Hart E."/>
            <person name="Haugen E."/>
            <person name="Heath P.D."/>
            <person name="Holmes S."/>
            <person name="Holt K."/>
            <person name="Howden P.J."/>
            <person name="Hunt A.R."/>
            <person name="Hunt S.E."/>
            <person name="Hunter G."/>
            <person name="Isherwood J."/>
            <person name="James R."/>
            <person name="Johnson C."/>
            <person name="Johnson D."/>
            <person name="Joy A."/>
            <person name="Kay M."/>
            <person name="Kershaw J.K."/>
            <person name="Kibukawa M."/>
            <person name="Kimberley A.M."/>
            <person name="King A."/>
            <person name="Knights A.J."/>
            <person name="Lad H."/>
            <person name="Laird G."/>
            <person name="Lawlor S."/>
            <person name="Leongamornlert D.A."/>
            <person name="Lloyd D.M."/>
            <person name="Loveland J."/>
            <person name="Lovell J."/>
            <person name="Lush M.J."/>
            <person name="Lyne R."/>
            <person name="Martin S."/>
            <person name="Mashreghi-Mohammadi M."/>
            <person name="Matthews L."/>
            <person name="Matthews N.S.W."/>
            <person name="McLaren S."/>
            <person name="Milne S."/>
            <person name="Mistry S."/>
            <person name="Moore M.J.F."/>
            <person name="Nickerson T."/>
            <person name="O'Dell C.N."/>
            <person name="Oliver K."/>
            <person name="Palmeiri A."/>
            <person name="Palmer S.A."/>
            <person name="Parker A."/>
            <person name="Patel D."/>
            <person name="Pearce A.V."/>
            <person name="Peck A.I."/>
            <person name="Pelan S."/>
            <person name="Phelps K."/>
            <person name="Phillimore B.J."/>
            <person name="Plumb R."/>
            <person name="Rajan J."/>
            <person name="Raymond C."/>
            <person name="Rouse G."/>
            <person name="Saenphimmachak C."/>
            <person name="Sehra H.K."/>
            <person name="Sheridan E."/>
            <person name="Shownkeen R."/>
            <person name="Sims S."/>
            <person name="Skuce C.D."/>
            <person name="Smith M."/>
            <person name="Steward C."/>
            <person name="Subramanian S."/>
            <person name="Sycamore N."/>
            <person name="Tracey A."/>
            <person name="Tromans A."/>
            <person name="Van Helmond Z."/>
            <person name="Wall M."/>
            <person name="Wallis J.M."/>
            <person name="White S."/>
            <person name="Whitehead S.L."/>
            <person name="Wilkinson J.E."/>
            <person name="Willey D.L."/>
            <person name="Williams H."/>
            <person name="Wilming L."/>
            <person name="Wray P.W."/>
            <person name="Wu Z."/>
            <person name="Coulson A."/>
            <person name="Vaudin M."/>
            <person name="Sulston J.E."/>
            <person name="Durbin R.M."/>
            <person name="Hubbard T."/>
            <person name="Wooster R."/>
            <person name="Dunham I."/>
            <person name="Carter N.P."/>
            <person name="McVean G."/>
            <person name="Ross M.T."/>
            <person name="Harrow J."/>
            <person name="Olson M.V."/>
            <person name="Beck S."/>
            <person name="Rogers J."/>
            <person name="Bentley D.R."/>
        </authorList>
    </citation>
    <scope>NUCLEOTIDE SEQUENCE [LARGE SCALE GENOMIC DNA]</scope>
</reference>
<reference key="3">
    <citation type="submission" date="2005-07" db="EMBL/GenBank/DDBJ databases">
        <authorList>
            <person name="Mural R.J."/>
            <person name="Istrail S."/>
            <person name="Sutton G.G."/>
            <person name="Florea L."/>
            <person name="Halpern A.L."/>
            <person name="Mobarry C.M."/>
            <person name="Lippert R."/>
            <person name="Walenz B."/>
            <person name="Shatkay H."/>
            <person name="Dew I."/>
            <person name="Miller J.R."/>
            <person name="Flanigan M.J."/>
            <person name="Edwards N.J."/>
            <person name="Bolanos R."/>
            <person name="Fasulo D."/>
            <person name="Halldorsson B.V."/>
            <person name="Hannenhalli S."/>
            <person name="Turner R."/>
            <person name="Yooseph S."/>
            <person name="Lu F."/>
            <person name="Nusskern D.R."/>
            <person name="Shue B.C."/>
            <person name="Zheng X.H."/>
            <person name="Zhong F."/>
            <person name="Delcher A.L."/>
            <person name="Huson D.H."/>
            <person name="Kravitz S.A."/>
            <person name="Mouchard L."/>
            <person name="Reinert K."/>
            <person name="Remington K.A."/>
            <person name="Clark A.G."/>
            <person name="Waterman M.S."/>
            <person name="Eichler E.E."/>
            <person name="Adams M.D."/>
            <person name="Hunkapiller M.W."/>
            <person name="Myers E.W."/>
            <person name="Venter J.C."/>
        </authorList>
    </citation>
    <scope>NUCLEOTIDE SEQUENCE [LARGE SCALE GENOMIC DNA]</scope>
</reference>
<reference key="4">
    <citation type="journal article" date="2004" name="Genome Res.">
        <title>The status, quality, and expansion of the NIH full-length cDNA project: the Mammalian Gene Collection (MGC).</title>
        <authorList>
            <consortium name="The MGC Project Team"/>
        </authorList>
    </citation>
    <scope>NUCLEOTIDE SEQUENCE [LARGE SCALE MRNA] (ISOFORMS 1 AND 2)</scope>
    <source>
        <tissue>Brain</tissue>
    </source>
</reference>
<reference key="5">
    <citation type="journal article" date="2015" name="FEBS Lett.">
        <title>FAM19A3, a novel secreted protein, modulates the microglia/macrophage polarization dynamics and ameliorates cerebral ischemia.</title>
        <authorList>
            <person name="Shao Y."/>
            <person name="Deng T."/>
            <person name="Zhang T."/>
            <person name="Li P."/>
            <person name="Wang Y."/>
        </authorList>
    </citation>
    <scope>SUBCELLULAR LOCATION</scope>
    <scope>TISSUE SPECIFICITY</scope>
</reference>